<name>G3PP1_ARATH</name>
<comment type="function">
    <text evidence="5 6">Involved in plastidial glycolytic pathway and plays a specific role in glycolytic energy production in non-green plastids and chloroplasts. Essential for breakdown of starch to form sucrose for export to non-photosynthetic tissues, and to generate primary metabolites for anabolic pathways such as fatty acid and amino acid synthesis. Plays an important role in plant development by providing substrates for the phosphorylated pathway of serine biosynthesis in roots. Plays a crucial role in pollen development. Functionally redundant with GAPCP2.</text>
</comment>
<comment type="catalytic activity">
    <reaction evidence="2">
        <text>D-glyceraldehyde 3-phosphate + phosphate + NAD(+) = (2R)-3-phospho-glyceroyl phosphate + NADH + H(+)</text>
        <dbReference type="Rhea" id="RHEA:10300"/>
        <dbReference type="ChEBI" id="CHEBI:15378"/>
        <dbReference type="ChEBI" id="CHEBI:43474"/>
        <dbReference type="ChEBI" id="CHEBI:57540"/>
        <dbReference type="ChEBI" id="CHEBI:57604"/>
        <dbReference type="ChEBI" id="CHEBI:57945"/>
        <dbReference type="ChEBI" id="CHEBI:59776"/>
        <dbReference type="EC" id="1.2.1.12"/>
    </reaction>
</comment>
<comment type="subunit">
    <text evidence="1">Homotetramer.</text>
</comment>
<comment type="subcellular location">
    <subcellularLocation>
        <location evidence="8">Plastid</location>
        <location evidence="8">Chloroplast stroma</location>
    </subcellularLocation>
</comment>
<comment type="tissue specificity">
    <text evidence="4 5">Expressed in shoot and root vasculature, leaf veins and vascular tissue of flowers and siliques.</text>
</comment>
<comment type="induction">
    <text evidence="4">Repressed by darkness, but not by sucrose.</text>
</comment>
<comment type="disruption phenotype">
    <text evidence="5 6">No visible phenotype under normal growth conditions. Gapcp1 and gapcp2 double mutants have severe dwarf phenotypes with arrested root development and male sterility. Pollen grains show shrunken and collapsed forms and cannot germinate.</text>
</comment>
<comment type="miscellaneous">
    <text>Plants contain three types of GAPDH: NAD-dependent cytosolic forms which participate in glycolysis, NAD-dependent chloroplastic forms which participate in plastidic glycolysis and NADP-dependent chloroplastic forms which participate in the photosynthetic reductive pentose phosphate pathway (Calvin-Benson cycle). All the forms are encoded by distinct genes.</text>
</comment>
<comment type="similarity">
    <text evidence="7">Belongs to the glyceraldehyde-3-phosphate dehydrogenase family.</text>
</comment>
<reference key="1">
    <citation type="journal article" date="2000" name="Nature">
        <title>Sequence and analysis of chromosome 1 of the plant Arabidopsis thaliana.</title>
        <authorList>
            <person name="Theologis A."/>
            <person name="Ecker J.R."/>
            <person name="Palm C.J."/>
            <person name="Federspiel N.A."/>
            <person name="Kaul S."/>
            <person name="White O."/>
            <person name="Alonso J."/>
            <person name="Altafi H."/>
            <person name="Araujo R."/>
            <person name="Bowman C.L."/>
            <person name="Brooks S.Y."/>
            <person name="Buehler E."/>
            <person name="Chan A."/>
            <person name="Chao Q."/>
            <person name="Chen H."/>
            <person name="Cheuk R.F."/>
            <person name="Chin C.W."/>
            <person name="Chung M.K."/>
            <person name="Conn L."/>
            <person name="Conway A.B."/>
            <person name="Conway A.R."/>
            <person name="Creasy T.H."/>
            <person name="Dewar K."/>
            <person name="Dunn P."/>
            <person name="Etgu P."/>
            <person name="Feldblyum T.V."/>
            <person name="Feng J.-D."/>
            <person name="Fong B."/>
            <person name="Fujii C.Y."/>
            <person name="Gill J.E."/>
            <person name="Goldsmith A.D."/>
            <person name="Haas B."/>
            <person name="Hansen N.F."/>
            <person name="Hughes B."/>
            <person name="Huizar L."/>
            <person name="Hunter J.L."/>
            <person name="Jenkins J."/>
            <person name="Johnson-Hopson C."/>
            <person name="Khan S."/>
            <person name="Khaykin E."/>
            <person name="Kim C.J."/>
            <person name="Koo H.L."/>
            <person name="Kremenetskaia I."/>
            <person name="Kurtz D.B."/>
            <person name="Kwan A."/>
            <person name="Lam B."/>
            <person name="Langin-Hooper S."/>
            <person name="Lee A."/>
            <person name="Lee J.M."/>
            <person name="Lenz C.A."/>
            <person name="Li J.H."/>
            <person name="Li Y.-P."/>
            <person name="Lin X."/>
            <person name="Liu S.X."/>
            <person name="Liu Z.A."/>
            <person name="Luros J.S."/>
            <person name="Maiti R."/>
            <person name="Marziali A."/>
            <person name="Militscher J."/>
            <person name="Miranda M."/>
            <person name="Nguyen M."/>
            <person name="Nierman W.C."/>
            <person name="Osborne B.I."/>
            <person name="Pai G."/>
            <person name="Peterson J."/>
            <person name="Pham P.K."/>
            <person name="Rizzo M."/>
            <person name="Rooney T."/>
            <person name="Rowley D."/>
            <person name="Sakano H."/>
            <person name="Salzberg S.L."/>
            <person name="Schwartz J.R."/>
            <person name="Shinn P."/>
            <person name="Southwick A.M."/>
            <person name="Sun H."/>
            <person name="Tallon L.J."/>
            <person name="Tambunga G."/>
            <person name="Toriumi M.J."/>
            <person name="Town C.D."/>
            <person name="Utterback T."/>
            <person name="Van Aken S."/>
            <person name="Vaysberg M."/>
            <person name="Vysotskaia V.S."/>
            <person name="Walker M."/>
            <person name="Wu D."/>
            <person name="Yu G."/>
            <person name="Fraser C.M."/>
            <person name="Venter J.C."/>
            <person name="Davis R.W."/>
        </authorList>
    </citation>
    <scope>NUCLEOTIDE SEQUENCE [LARGE SCALE GENOMIC DNA]</scope>
    <source>
        <strain>cv. Columbia</strain>
    </source>
</reference>
<reference key="2">
    <citation type="journal article" date="2017" name="Plant J.">
        <title>Araport11: a complete reannotation of the Arabidopsis thaliana reference genome.</title>
        <authorList>
            <person name="Cheng C.Y."/>
            <person name="Krishnakumar V."/>
            <person name="Chan A.P."/>
            <person name="Thibaud-Nissen F."/>
            <person name="Schobel S."/>
            <person name="Town C.D."/>
        </authorList>
    </citation>
    <scope>GENOME REANNOTATION</scope>
    <source>
        <strain>cv. Columbia</strain>
    </source>
</reference>
<reference key="3">
    <citation type="journal article" date="2002" name="Science">
        <title>Functional annotation of a full-length Arabidopsis cDNA collection.</title>
        <authorList>
            <person name="Seki M."/>
            <person name="Narusaka M."/>
            <person name="Kamiya A."/>
            <person name="Ishida J."/>
            <person name="Satou M."/>
            <person name="Sakurai T."/>
            <person name="Nakajima M."/>
            <person name="Enju A."/>
            <person name="Akiyama K."/>
            <person name="Oono Y."/>
            <person name="Muramatsu M."/>
            <person name="Hayashizaki Y."/>
            <person name="Kawai J."/>
            <person name="Carninci P."/>
            <person name="Itoh M."/>
            <person name="Ishii Y."/>
            <person name="Arakawa T."/>
            <person name="Shibata K."/>
            <person name="Shinagawa A."/>
            <person name="Shinozaki K."/>
        </authorList>
    </citation>
    <scope>NUCLEOTIDE SEQUENCE [LARGE SCALE MRNA]</scope>
    <source>
        <strain>cv. Columbia</strain>
    </source>
</reference>
<reference key="4">
    <citation type="journal article" date="2003" name="Science">
        <title>Empirical analysis of transcriptional activity in the Arabidopsis genome.</title>
        <authorList>
            <person name="Yamada K."/>
            <person name="Lim J."/>
            <person name="Dale J.M."/>
            <person name="Chen H."/>
            <person name="Shinn P."/>
            <person name="Palm C.J."/>
            <person name="Southwick A.M."/>
            <person name="Wu H.C."/>
            <person name="Kim C.J."/>
            <person name="Nguyen M."/>
            <person name="Pham P.K."/>
            <person name="Cheuk R.F."/>
            <person name="Karlin-Newmann G."/>
            <person name="Liu S.X."/>
            <person name="Lam B."/>
            <person name="Sakano H."/>
            <person name="Wu T."/>
            <person name="Yu G."/>
            <person name="Miranda M."/>
            <person name="Quach H.L."/>
            <person name="Tripp M."/>
            <person name="Chang C.H."/>
            <person name="Lee J.M."/>
            <person name="Toriumi M.J."/>
            <person name="Chan M.M."/>
            <person name="Tang C.C."/>
            <person name="Onodera C.S."/>
            <person name="Deng J.M."/>
            <person name="Akiyama K."/>
            <person name="Ansari Y."/>
            <person name="Arakawa T."/>
            <person name="Banh J."/>
            <person name="Banno F."/>
            <person name="Bowser L."/>
            <person name="Brooks S.Y."/>
            <person name="Carninci P."/>
            <person name="Chao Q."/>
            <person name="Choy N."/>
            <person name="Enju A."/>
            <person name="Goldsmith A.D."/>
            <person name="Gurjal M."/>
            <person name="Hansen N.F."/>
            <person name="Hayashizaki Y."/>
            <person name="Johnson-Hopson C."/>
            <person name="Hsuan V.W."/>
            <person name="Iida K."/>
            <person name="Karnes M."/>
            <person name="Khan S."/>
            <person name="Koesema E."/>
            <person name="Ishida J."/>
            <person name="Jiang P.X."/>
            <person name="Jones T."/>
            <person name="Kawai J."/>
            <person name="Kamiya A."/>
            <person name="Meyers C."/>
            <person name="Nakajima M."/>
            <person name="Narusaka M."/>
            <person name="Seki M."/>
            <person name="Sakurai T."/>
            <person name="Satou M."/>
            <person name="Tamse R."/>
            <person name="Vaysberg M."/>
            <person name="Wallender E.K."/>
            <person name="Wong C."/>
            <person name="Yamamura Y."/>
            <person name="Yuan S."/>
            <person name="Shinozaki K."/>
            <person name="Davis R.W."/>
            <person name="Theologis A."/>
            <person name="Ecker J.R."/>
        </authorList>
    </citation>
    <scope>NUCLEOTIDE SEQUENCE [LARGE SCALE MRNA]</scope>
    <source>
        <strain>cv. Columbia</strain>
    </source>
</reference>
<reference key="5">
    <citation type="journal article" date="2005" name="J. Exp. Bot.">
        <title>Co-ordinated gene expression of photosynthetic glyceraldehyde-3-phosphate dehydrogenase, phosphoribulokinase, and CP12 in Arabidopsis thaliana.</title>
        <authorList>
            <person name="Marri L."/>
            <person name="Sparla F."/>
            <person name="Pupillo P."/>
            <person name="Trost P."/>
        </authorList>
    </citation>
    <scope>TISSUE SPECIFICITY</scope>
    <scope>INDUCTION</scope>
</reference>
<reference key="6">
    <citation type="journal article" date="2009" name="Plant Physiol.">
        <title>Plastidial glyceraldehyde-3-phosphate dehydrogenase deficiency leads to altered root development and affects the sugar and amino acid balance in Arabidopsis.</title>
        <authorList>
            <person name="Munoz-Bertomeu J."/>
            <person name="Cascales-Minana B."/>
            <person name="Mulet J.M."/>
            <person name="Baroja-Fernandez E."/>
            <person name="Pozueta-Romero J."/>
            <person name="Kuhn J.M."/>
            <person name="Segura J."/>
            <person name="Ros R."/>
        </authorList>
    </citation>
    <scope>FUNCTION</scope>
    <scope>SUBCELLULAR LOCATION</scope>
    <scope>TISSUE SPECIFICITY</scope>
    <scope>DISRUPTION PHENOTYPE</scope>
</reference>
<reference key="7">
    <citation type="journal article" date="2010" name="Plant Physiol.">
        <title>The plastidial glyceraldehyde-3-phosphate dehydrogenase is critical for viable pollen development in Arabidopsis.</title>
        <authorList>
            <person name="Munoz-Bertomeu J."/>
            <person name="Cascales-Minana B."/>
            <person name="Irles-Segura A."/>
            <person name="Mateu I."/>
            <person name="Nunes-Nesi A."/>
            <person name="Fernie A.R."/>
            <person name="Segura J."/>
            <person name="Ros R."/>
        </authorList>
    </citation>
    <scope>FUNCTION</scope>
    <scope>DISRUPTION PHENOTYPE</scope>
    <scope>MUTAGENESIS OF CYS-236; HIS-263; LYS-311 AND ARG-318</scope>
</reference>
<reference key="8">
    <citation type="journal article" date="2012" name="Mol. Cell. Proteomics">
        <title>Comparative large-scale characterisation of plant vs. mammal proteins reveals similar and idiosyncratic N-alpha acetylation features.</title>
        <authorList>
            <person name="Bienvenut W.V."/>
            <person name="Sumpton D."/>
            <person name="Martinez A."/>
            <person name="Lilla S."/>
            <person name="Espagne C."/>
            <person name="Meinnel T."/>
            <person name="Giglione C."/>
        </authorList>
    </citation>
    <scope>ACETYLATION [LARGE SCALE ANALYSIS] AT THR-70</scope>
    <scope>CLEAVAGE OF TRANSIT PEPTIDE [LARGE SCALE ANALYSIS] AFTER ALA-69</scope>
    <scope>IDENTIFICATION BY MASS SPECTROMETRY [LARGE SCALE ANALYSIS]</scope>
</reference>
<dbReference type="EC" id="1.2.1.12"/>
<dbReference type="EMBL" id="AC007202">
    <property type="protein sequence ID" value="AAD30223.1"/>
    <property type="molecule type" value="Genomic_DNA"/>
</dbReference>
<dbReference type="EMBL" id="CP002684">
    <property type="protein sequence ID" value="AEE36260.1"/>
    <property type="molecule type" value="Genomic_DNA"/>
</dbReference>
<dbReference type="EMBL" id="AK117920">
    <property type="protein sequence ID" value="BAC42558.1"/>
    <property type="molecule type" value="mRNA"/>
</dbReference>
<dbReference type="EMBL" id="AF348583">
    <property type="protein sequence ID" value="AAK15554.1"/>
    <property type="molecule type" value="mRNA"/>
</dbReference>
<dbReference type="PIR" id="F96826">
    <property type="entry name" value="F96826"/>
</dbReference>
<dbReference type="SMR" id="Q9SAJ6"/>
<dbReference type="BioGRID" id="29510">
    <property type="interactions" value="2"/>
</dbReference>
<dbReference type="FunCoup" id="Q9SAJ6">
    <property type="interactions" value="1822"/>
</dbReference>
<dbReference type="IntAct" id="Q9SAJ6">
    <property type="interactions" value="2"/>
</dbReference>
<dbReference type="STRING" id="3702.Q9SAJ6"/>
<dbReference type="iPTMnet" id="Q9SAJ6"/>
<dbReference type="SwissPalm" id="Q9SAJ6"/>
<dbReference type="PaxDb" id="3702-AT1G79530.1"/>
<dbReference type="ProMEX" id="Q9SAJ6"/>
<dbReference type="ProteomicsDB" id="230442"/>
<dbReference type="EnsemblPlants" id="AT1G79530.1">
    <property type="protein sequence ID" value="AT1G79530.1"/>
    <property type="gene ID" value="AT1G79530"/>
</dbReference>
<dbReference type="GeneID" id="844291"/>
<dbReference type="Gramene" id="AT1G79530.1">
    <property type="protein sequence ID" value="AT1G79530.1"/>
    <property type="gene ID" value="AT1G79530"/>
</dbReference>
<dbReference type="KEGG" id="ath:AT1G79530"/>
<dbReference type="Araport" id="AT1G79530"/>
<dbReference type="TAIR" id="AT1G79530">
    <property type="gene designation" value="GAPCP-1"/>
</dbReference>
<dbReference type="eggNOG" id="KOG0657">
    <property type="taxonomic scope" value="Eukaryota"/>
</dbReference>
<dbReference type="HOGENOM" id="CLU_030140_0_3_1"/>
<dbReference type="InParanoid" id="Q9SAJ6"/>
<dbReference type="OMA" id="IKHASEG"/>
<dbReference type="OrthoDB" id="1152826at2759"/>
<dbReference type="PhylomeDB" id="Q9SAJ6"/>
<dbReference type="BRENDA" id="1.2.1.12">
    <property type="organism ID" value="399"/>
</dbReference>
<dbReference type="CD-CODE" id="4299E36E">
    <property type="entry name" value="Nucleolus"/>
</dbReference>
<dbReference type="PRO" id="PR:Q9SAJ6"/>
<dbReference type="Proteomes" id="UP000006548">
    <property type="component" value="Chromosome 1"/>
</dbReference>
<dbReference type="ExpressionAtlas" id="Q9SAJ6">
    <property type="expression patterns" value="baseline and differential"/>
</dbReference>
<dbReference type="GO" id="GO:0009570">
    <property type="term" value="C:chloroplast stroma"/>
    <property type="evidence" value="ECO:0007669"/>
    <property type="project" value="UniProtKB-SubCell"/>
</dbReference>
<dbReference type="GO" id="GO:0009536">
    <property type="term" value="C:plastid"/>
    <property type="evidence" value="ECO:0000314"/>
    <property type="project" value="TAIR"/>
</dbReference>
<dbReference type="GO" id="GO:0005507">
    <property type="term" value="F:copper ion binding"/>
    <property type="evidence" value="ECO:0007005"/>
    <property type="project" value="TAIR"/>
</dbReference>
<dbReference type="GO" id="GO:0004365">
    <property type="term" value="F:glyceraldehyde-3-phosphate dehydrogenase (NAD+) (phosphorylating) activity"/>
    <property type="evidence" value="ECO:0000315"/>
    <property type="project" value="TAIR"/>
</dbReference>
<dbReference type="GO" id="GO:0051287">
    <property type="term" value="F:NAD binding"/>
    <property type="evidence" value="ECO:0007669"/>
    <property type="project" value="InterPro"/>
</dbReference>
<dbReference type="GO" id="GO:0050661">
    <property type="term" value="F:NADP binding"/>
    <property type="evidence" value="ECO:0007669"/>
    <property type="project" value="InterPro"/>
</dbReference>
<dbReference type="GO" id="GO:0008270">
    <property type="term" value="F:zinc ion binding"/>
    <property type="evidence" value="ECO:0007005"/>
    <property type="project" value="TAIR"/>
</dbReference>
<dbReference type="GO" id="GO:0048658">
    <property type="term" value="P:anther wall tapetum development"/>
    <property type="evidence" value="ECO:0000315"/>
    <property type="project" value="TAIR"/>
</dbReference>
<dbReference type="GO" id="GO:0005975">
    <property type="term" value="P:carbohydrate metabolic process"/>
    <property type="evidence" value="ECO:0000315"/>
    <property type="project" value="TAIR"/>
</dbReference>
<dbReference type="GO" id="GO:0006006">
    <property type="term" value="P:glucose metabolic process"/>
    <property type="evidence" value="ECO:0007669"/>
    <property type="project" value="InterPro"/>
</dbReference>
<dbReference type="GO" id="GO:0006096">
    <property type="term" value="P:glycolytic process"/>
    <property type="evidence" value="ECO:0007669"/>
    <property type="project" value="UniProtKB-KW"/>
</dbReference>
<dbReference type="GO" id="GO:0080144">
    <property type="term" value="P:intracellular amino acid homeostasis"/>
    <property type="evidence" value="ECO:0000315"/>
    <property type="project" value="TAIR"/>
</dbReference>
<dbReference type="GO" id="GO:0009555">
    <property type="term" value="P:pollen development"/>
    <property type="evidence" value="ECO:0000315"/>
    <property type="project" value="TAIR"/>
</dbReference>
<dbReference type="GO" id="GO:0080022">
    <property type="term" value="P:primary root development"/>
    <property type="evidence" value="ECO:0000315"/>
    <property type="project" value="TAIR"/>
</dbReference>
<dbReference type="CDD" id="cd18126">
    <property type="entry name" value="GAPDH_I_C"/>
    <property type="match status" value="1"/>
</dbReference>
<dbReference type="CDD" id="cd05214">
    <property type="entry name" value="GAPDH_I_N"/>
    <property type="match status" value="1"/>
</dbReference>
<dbReference type="FunFam" id="3.30.360.10:FF:000001">
    <property type="entry name" value="Glyceraldehyde-3-phosphate dehydrogenase"/>
    <property type="match status" value="1"/>
</dbReference>
<dbReference type="FunFam" id="3.40.50.720:FF:000020">
    <property type="entry name" value="Glyceraldehyde-3-phosphate dehydrogenase"/>
    <property type="match status" value="1"/>
</dbReference>
<dbReference type="Gene3D" id="3.30.360.10">
    <property type="entry name" value="Dihydrodipicolinate Reductase, domain 2"/>
    <property type="match status" value="1"/>
</dbReference>
<dbReference type="Gene3D" id="3.40.50.720">
    <property type="entry name" value="NAD(P)-binding Rossmann-like Domain"/>
    <property type="match status" value="1"/>
</dbReference>
<dbReference type="InterPro" id="IPR020831">
    <property type="entry name" value="GlycerAld/Erythrose_P_DH"/>
</dbReference>
<dbReference type="InterPro" id="IPR020830">
    <property type="entry name" value="GlycerAld_3-P_DH_AS"/>
</dbReference>
<dbReference type="InterPro" id="IPR020829">
    <property type="entry name" value="GlycerAld_3-P_DH_cat"/>
</dbReference>
<dbReference type="InterPro" id="IPR020828">
    <property type="entry name" value="GlycerAld_3-P_DH_NAD(P)-bd"/>
</dbReference>
<dbReference type="InterPro" id="IPR006424">
    <property type="entry name" value="Glyceraldehyde-3-P_DH_1"/>
</dbReference>
<dbReference type="InterPro" id="IPR036291">
    <property type="entry name" value="NAD(P)-bd_dom_sf"/>
</dbReference>
<dbReference type="NCBIfam" id="TIGR01534">
    <property type="entry name" value="GAPDH-I"/>
    <property type="match status" value="1"/>
</dbReference>
<dbReference type="PANTHER" id="PTHR10836">
    <property type="entry name" value="GLYCERALDEHYDE 3-PHOSPHATE DEHYDROGENASE"/>
    <property type="match status" value="1"/>
</dbReference>
<dbReference type="PANTHER" id="PTHR10836:SF92">
    <property type="entry name" value="GLYCERALDEHYDE-3-PHOSPHATE DEHYDROGENASE GAPCP1, CHLOROPLASTIC"/>
    <property type="match status" value="1"/>
</dbReference>
<dbReference type="Pfam" id="PF02800">
    <property type="entry name" value="Gp_dh_C"/>
    <property type="match status" value="1"/>
</dbReference>
<dbReference type="Pfam" id="PF00044">
    <property type="entry name" value="Gp_dh_N"/>
    <property type="match status" value="1"/>
</dbReference>
<dbReference type="PRINTS" id="PR00078">
    <property type="entry name" value="G3PDHDRGNASE"/>
</dbReference>
<dbReference type="SMART" id="SM00846">
    <property type="entry name" value="Gp_dh_N"/>
    <property type="match status" value="1"/>
</dbReference>
<dbReference type="SUPFAM" id="SSF55347">
    <property type="entry name" value="Glyceraldehyde-3-phosphate dehydrogenase-like, C-terminal domain"/>
    <property type="match status" value="1"/>
</dbReference>
<dbReference type="SUPFAM" id="SSF51735">
    <property type="entry name" value="NAD(P)-binding Rossmann-fold domains"/>
    <property type="match status" value="1"/>
</dbReference>
<dbReference type="PROSITE" id="PS00071">
    <property type="entry name" value="GAPDH"/>
    <property type="match status" value="1"/>
</dbReference>
<feature type="transit peptide" description="Chloroplast" evidence="9">
    <location>
        <begin position="1"/>
        <end position="69"/>
    </location>
</feature>
<feature type="chain" id="PRO_0000422407" description="Glyceraldehyde-3-phosphate dehydrogenase GAPCP1, chloroplastic">
    <location>
        <begin position="70"/>
        <end position="422"/>
    </location>
</feature>
<feature type="region of interest" description="Disordered" evidence="3">
    <location>
        <begin position="50"/>
        <end position="84"/>
    </location>
</feature>
<feature type="compositionally biased region" description="Polar residues" evidence="3">
    <location>
        <begin position="50"/>
        <end position="63"/>
    </location>
</feature>
<feature type="active site" description="Nucleophile" evidence="2">
    <location>
        <position position="236"/>
    </location>
</feature>
<feature type="binding site" evidence="1">
    <location>
        <begin position="96"/>
        <end position="97"/>
    </location>
    <ligand>
        <name>NAD(+)</name>
        <dbReference type="ChEBI" id="CHEBI:57540"/>
    </ligand>
</feature>
<feature type="binding site" evidence="1">
    <location>
        <position position="118"/>
    </location>
    <ligand>
        <name>NAD(+)</name>
        <dbReference type="ChEBI" id="CHEBI:57540"/>
    </ligand>
</feature>
<feature type="binding site" evidence="1">
    <location>
        <position position="164"/>
    </location>
    <ligand>
        <name>NAD(+)</name>
        <dbReference type="ChEBI" id="CHEBI:57540"/>
    </ligand>
</feature>
<feature type="binding site" evidence="1">
    <location>
        <begin position="235"/>
        <end position="237"/>
    </location>
    <ligand>
        <name>D-glyceraldehyde 3-phosphate</name>
        <dbReference type="ChEBI" id="CHEBI:59776"/>
    </ligand>
</feature>
<feature type="binding site" evidence="1">
    <location>
        <position position="266"/>
    </location>
    <ligand>
        <name>D-glyceraldehyde 3-phosphate</name>
        <dbReference type="ChEBI" id="CHEBI:59776"/>
    </ligand>
</feature>
<feature type="binding site" evidence="1">
    <location>
        <begin position="295"/>
        <end position="296"/>
    </location>
    <ligand>
        <name>D-glyceraldehyde 3-phosphate</name>
        <dbReference type="ChEBI" id="CHEBI:59776"/>
    </ligand>
</feature>
<feature type="binding site" evidence="1">
    <location>
        <position position="318"/>
    </location>
    <ligand>
        <name>D-glyceraldehyde 3-phosphate</name>
        <dbReference type="ChEBI" id="CHEBI:59776"/>
    </ligand>
</feature>
<feature type="binding site" evidence="1">
    <location>
        <position position="400"/>
    </location>
    <ligand>
        <name>NAD(+)</name>
        <dbReference type="ChEBI" id="CHEBI:57540"/>
    </ligand>
</feature>
<feature type="site" description="Activates thiol group during catalysis" evidence="1">
    <location>
        <position position="263"/>
    </location>
</feature>
<feature type="modified residue" description="N-acetylthreonine" evidence="9">
    <location>
        <position position="70"/>
    </location>
</feature>
<feature type="mutagenesis site" description="Loss of activity." evidence="6">
    <original>C</original>
    <variation>G</variation>
    <location>
        <position position="236"/>
    </location>
</feature>
<feature type="mutagenesis site" description="Loss of activity." evidence="6">
    <original>H</original>
    <variation>A</variation>
    <location>
        <position position="263"/>
    </location>
</feature>
<feature type="mutagenesis site" description="No effect on the activity." evidence="6">
    <original>K</original>
    <variation>A</variation>
    <location>
        <position position="311"/>
    </location>
</feature>
<feature type="mutagenesis site" description="Loss of activity." evidence="6">
    <original>R</original>
    <variation>E</variation>
    <location>
        <position position="318"/>
    </location>
</feature>
<gene>
    <name type="primary">GAPCP1</name>
    <name type="ordered locus">At1g79530</name>
    <name type="ORF">T8K14.5</name>
</gene>
<organism>
    <name type="scientific">Arabidopsis thaliana</name>
    <name type="common">Mouse-ear cress</name>
    <dbReference type="NCBI Taxonomy" id="3702"/>
    <lineage>
        <taxon>Eukaryota</taxon>
        <taxon>Viridiplantae</taxon>
        <taxon>Streptophyta</taxon>
        <taxon>Embryophyta</taxon>
        <taxon>Tracheophyta</taxon>
        <taxon>Spermatophyta</taxon>
        <taxon>Magnoliopsida</taxon>
        <taxon>eudicotyledons</taxon>
        <taxon>Gunneridae</taxon>
        <taxon>Pentapetalae</taxon>
        <taxon>rosids</taxon>
        <taxon>malvids</taxon>
        <taxon>Brassicales</taxon>
        <taxon>Brassicaceae</taxon>
        <taxon>Camelineae</taxon>
        <taxon>Arabidopsis</taxon>
    </lineage>
</organism>
<keyword id="KW-0007">Acetylation</keyword>
<keyword id="KW-0150">Chloroplast</keyword>
<keyword id="KW-0324">Glycolysis</keyword>
<keyword id="KW-0520">NAD</keyword>
<keyword id="KW-0560">Oxidoreductase</keyword>
<keyword id="KW-0934">Plastid</keyword>
<keyword id="KW-1185">Reference proteome</keyword>
<keyword id="KW-0809">Transit peptide</keyword>
<sequence>MAFSSLLRSAASYTVAAPRPDFFSSPASDHSKVLSSLGFSRNLKPSRFSSGISSSLQNGNARSVQPIKATATEVPSAVRRSSSSGKTKVGINGFGRIGRLVLRIATSRDDIEVVAVNDPFIDAKYMAYMLKYDSTHGNFKGSINVIDDSTLEINGKKVNVVSKRDPSEIPWADLGADYVVESSGVFTTLSKAASHLKGGAKKVIISAPSADAPMFVVGVNEHTYQPNMDIVSNASCTTNCLAPLAKVVHEEFGILEGLMTTVHATTATQKTVDGPSMKDWRGGRGASQNIIPSSTGAAKAVGKVLPELNGKLTGMAFRVPTSNVSVVDLTCRLEKGASYEDVKAAIKHASEGPLKGILGYTDEDVVSNDFVGDSRSSIFDANAGIGLSKSFVKLVSWYDNEWGYSNRVLDLIEHMALVAASH</sequence>
<proteinExistence type="evidence at protein level"/>
<evidence type="ECO:0000250" key="1"/>
<evidence type="ECO:0000255" key="2">
    <source>
        <dbReference type="PROSITE-ProRule" id="PRU10009"/>
    </source>
</evidence>
<evidence type="ECO:0000256" key="3">
    <source>
        <dbReference type="SAM" id="MobiDB-lite"/>
    </source>
</evidence>
<evidence type="ECO:0000269" key="4">
    <source>
    </source>
</evidence>
<evidence type="ECO:0000269" key="5">
    <source>
    </source>
</evidence>
<evidence type="ECO:0000269" key="6">
    <source>
    </source>
</evidence>
<evidence type="ECO:0000305" key="7"/>
<evidence type="ECO:0000305" key="8">
    <source>
    </source>
</evidence>
<evidence type="ECO:0007744" key="9">
    <source>
    </source>
</evidence>
<protein>
    <recommendedName>
        <fullName>Glyceraldehyde-3-phosphate dehydrogenase GAPCP1, chloroplastic</fullName>
        <ecNumber>1.2.1.12</ecNumber>
    </recommendedName>
    <alternativeName>
        <fullName>Glyceraldehyde-3-phosphate dehydrogenase of plastid 1</fullName>
    </alternativeName>
    <alternativeName>
        <fullName>NAD-dependent glyceraldehydephosphate dehydrogenase chloroplastic 1</fullName>
    </alternativeName>
</protein>
<accession>Q9SAJ6</accession>